<reference key="1">
    <citation type="journal article" date="1995" name="Biosci. Biotechnol. Biochem.">
        <title>Decreasing accumulation of acetate in a rich medium by Escherichia coli on introduction of genes on a multicopy plasmid.</title>
        <authorList>
            <person name="Hosono K."/>
            <person name="Kakuda H."/>
            <person name="Ichihara S."/>
        </authorList>
    </citation>
    <scope>NUCLEOTIDE SEQUENCE [GENOMIC DNA]</scope>
    <source>
        <strain>K12</strain>
    </source>
</reference>
<reference key="2">
    <citation type="journal article" date="1996" name="DNA Res.">
        <title>A 570-kb DNA sequence of the Escherichia coli K-12 genome corresponding to the 28.0-40.1 min region on the linkage map.</title>
        <authorList>
            <person name="Aiba H."/>
            <person name="Baba T."/>
            <person name="Fujita K."/>
            <person name="Hayashi K."/>
            <person name="Inada T."/>
            <person name="Isono K."/>
            <person name="Itoh T."/>
            <person name="Kasai H."/>
            <person name="Kashimoto K."/>
            <person name="Kimura S."/>
            <person name="Kitakawa M."/>
            <person name="Kitagawa M."/>
            <person name="Makino K."/>
            <person name="Miki T."/>
            <person name="Mizobuchi K."/>
            <person name="Mori H."/>
            <person name="Mori T."/>
            <person name="Motomura K."/>
            <person name="Nakade S."/>
            <person name="Nakamura Y."/>
            <person name="Nashimoto H."/>
            <person name="Nishio Y."/>
            <person name="Oshima T."/>
            <person name="Saito N."/>
            <person name="Sampei G."/>
            <person name="Seki Y."/>
            <person name="Sivasundaram S."/>
            <person name="Tagami H."/>
            <person name="Takeda J."/>
            <person name="Takemoto K."/>
            <person name="Takeuchi Y."/>
            <person name="Wada C."/>
            <person name="Yamamoto Y."/>
            <person name="Horiuchi T."/>
        </authorList>
    </citation>
    <scope>NUCLEOTIDE SEQUENCE [LARGE SCALE GENOMIC DNA]</scope>
    <source>
        <strain>K12 / W3110 / ATCC 27325 / DSM 5911</strain>
    </source>
</reference>
<reference key="3">
    <citation type="journal article" date="1997" name="Science">
        <title>The complete genome sequence of Escherichia coli K-12.</title>
        <authorList>
            <person name="Blattner F.R."/>
            <person name="Plunkett G. III"/>
            <person name="Bloch C.A."/>
            <person name="Perna N.T."/>
            <person name="Burland V."/>
            <person name="Riley M."/>
            <person name="Collado-Vides J."/>
            <person name="Glasner J.D."/>
            <person name="Rode C.K."/>
            <person name="Mayhew G.F."/>
            <person name="Gregor J."/>
            <person name="Davis N.W."/>
            <person name="Kirkpatrick H.A."/>
            <person name="Goeden M.A."/>
            <person name="Rose D.J."/>
            <person name="Mau B."/>
            <person name="Shao Y."/>
        </authorList>
    </citation>
    <scope>NUCLEOTIDE SEQUENCE [LARGE SCALE GENOMIC DNA]</scope>
    <source>
        <strain>K12 / MG1655 / ATCC 47076</strain>
    </source>
</reference>
<reference key="4">
    <citation type="journal article" date="2006" name="Mol. Syst. Biol.">
        <title>Highly accurate genome sequences of Escherichia coli K-12 strains MG1655 and W3110.</title>
        <authorList>
            <person name="Hayashi K."/>
            <person name="Morooka N."/>
            <person name="Yamamoto Y."/>
            <person name="Fujita K."/>
            <person name="Isono K."/>
            <person name="Choi S."/>
            <person name="Ohtsubo E."/>
            <person name="Baba T."/>
            <person name="Wanner B.L."/>
            <person name="Mori H."/>
            <person name="Horiuchi T."/>
        </authorList>
    </citation>
    <scope>NUCLEOTIDE SEQUENCE [LARGE SCALE GENOMIC DNA]</scope>
    <source>
        <strain>K12 / W3110 / ATCC 27325 / DSM 5911</strain>
    </source>
</reference>
<reference key="5">
    <citation type="journal article" date="1998" name="Mol. Microbiol.">
        <title>Control of the expression of the manXYZ operon in Escherichia coli: Mlc is a negative regulator of the mannose PTS.</title>
        <authorList>
            <person name="Plumbridge J."/>
        </authorList>
    </citation>
    <scope>FUNCTION</scope>
</reference>
<reference key="6">
    <citation type="journal article" date="1998" name="Mol. Microbiol.">
        <title>Negative transcriptional regulation of a positive regulator: the expression of malT, encoding the transcriptional activator of the maltose regulon of Escherichia coli, is negatively controlled by Mlc.</title>
        <authorList>
            <person name="Decker K."/>
            <person name="Plumbridge J."/>
            <person name="Boos W."/>
        </authorList>
    </citation>
    <scope>FUNCTION</scope>
    <scope>DNA-BINDING</scope>
    <scope>TRANSCRIPTIONAL REGULATION</scope>
    <scope>DISRUPTION PHENOTYPE</scope>
    <source>
        <strain>K12 / MC4100 / ATCC 35695 / DSM 6574</strain>
    </source>
</reference>
<reference key="7">
    <citation type="journal article" date="1998" name="Mol. Microbiol.">
        <title>A global repressor (Mlc) is involved in glucose induction of the ptsG gene encoding major glucose transporter in Escherichia coli.</title>
        <authorList>
            <person name="Kimata K."/>
            <person name="Inada T."/>
            <person name="Tagami H."/>
            <person name="Aiba H."/>
        </authorList>
    </citation>
    <scope>FUNCTION</scope>
    <scope>DNA-BINDING</scope>
    <scope>ACTIVITY REGULATION</scope>
    <scope>DISRUPTION PHENOTYPE</scope>
    <source>
        <strain>K12</strain>
    </source>
</reference>
<reference key="8">
    <citation type="journal article" date="1999" name="J. Biol. Chem.">
        <title>Purification of Mlc and analysis of its effects on the PTS expression in Escherichia coli.</title>
        <authorList>
            <person name="Kim S.-Y."/>
            <person name="Nam T.-W."/>
            <person name="Shin D."/>
            <person name="Koo B.-M."/>
            <person name="Seok Y.-J."/>
            <person name="Ryu S."/>
        </authorList>
    </citation>
    <scope>FUNCTION</scope>
    <scope>DNA-BINDING</scope>
    <scope>ACTIVITY REGULATION</scope>
</reference>
<reference key="9">
    <citation type="journal article" date="2000" name="EMBO J.">
        <title>Signal transduction between a membrane-bound transporter, PtsG, and a soluble transcription factor, Mlc, of Escherichia coli.</title>
        <authorList>
            <person name="Lee S.J."/>
            <person name="Boos W."/>
            <person name="Bouche J.P."/>
            <person name="Plumbridge J."/>
        </authorList>
    </citation>
    <scope>ACTIVITY REGULATION</scope>
    <scope>INTERACTION WITH DEPHOSPHORYLATED PTSG</scope>
    <scope>SUBCELLULAR LOCATION</scope>
</reference>
<reference key="10">
    <citation type="journal article" date="2001" name="EMBO J.">
        <title>The Escherichia coli glucose transporter enzyme IICB(Glc) recruits the global repressor Mlc.</title>
        <authorList>
            <person name="Nam T.W."/>
            <person name="Cho S.H."/>
            <person name="Shin D."/>
            <person name="Kim J.H."/>
            <person name="Jeong J.Y."/>
            <person name="Lee J.H."/>
            <person name="Roe J.H."/>
            <person name="Peterkofsky A."/>
            <person name="Kang S.O."/>
            <person name="Ryu S."/>
            <person name="Seok Y.J."/>
        </authorList>
    </citation>
    <scope>ACTIVITY REGULATION</scope>
    <scope>INTERACTION WITH DEPHOSPHORYLATED PTSG</scope>
</reference>
<reference key="11">
    <citation type="journal article" date="2001" name="J. Biol. Chem.">
        <title>Heat shock RNA polymerase (E sigma(32)) is involved in the transcription of mlc and crucial for induction of the Mlc regulon by glucose in Escherichia coli.</title>
        <authorList>
            <person name="Shin D."/>
            <person name="Lim S."/>
            <person name="Seok Y.J."/>
            <person name="Ryu S."/>
        </authorList>
    </citation>
    <scope>INDUCTION</scope>
    <source>
        <strain>K12 / MC4100 / ATCC 35695 / DSM 6574</strain>
    </source>
</reference>
<reference key="12">
    <citation type="journal article" date="2001" name="J. Mol. Microbiol. Biotechnol.">
        <title>Regulation of PTS gene expression by the homologous transcriptional regulators, Mlc and NagC, in Escherichia coli (or how two similar repressors can behave differently).</title>
        <authorList>
            <person name="Plumbridge J."/>
        </authorList>
    </citation>
    <scope>FUNCTION</scope>
</reference>
<reference key="13">
    <citation type="journal article" date="2002" name="Curr. Opin. Microbiol.">
        <title>Regulation of gene expression in the PTS in Escherichia coli: the role and interactions of Mlc.</title>
        <authorList>
            <person name="Plumbridge J."/>
        </authorList>
    </citation>
    <scope>FUNCTION</scope>
    <scope>REVIEW</scope>
</reference>
<reference key="14">
    <citation type="journal article" date="2003" name="J. Biol. Chem.">
        <title>Analysis of the interaction between the global regulator Mlc and EIIBGlc of the glucose-specific phosphotransferase system in Escherichia coli.</title>
        <authorList>
            <person name="Seitz S."/>
            <person name="Lee S.J."/>
            <person name="Pennetier C."/>
            <person name="Boos W."/>
            <person name="Plumbridge J."/>
        </authorList>
    </citation>
    <scope>ACTIVITY REGULATION</scope>
    <scope>SUBUNIT</scope>
    <scope>INTERACTION WITH DEPHOSPHORYLATED PTSG</scope>
    <scope>SUBCELLULAR LOCATION</scope>
    <scope>DOMAIN</scope>
</reference>
<reference key="15">
    <citation type="journal article" date="2005" name="Acta Crystallogr. F">
        <title>Crystallization and preliminary X-ray analysis of Mlc from Escherichia coli.</title>
        <authorList>
            <person name="Gerber K."/>
            <person name="Boos W."/>
            <person name="Welte W."/>
            <person name="Schiefner A."/>
        </authorList>
    </citation>
    <scope>CRYSTALLIZATION OF MUTANT HIS-52</scope>
    <scope>SUBUNIT</scope>
    <scope>MUTAGENESIS OF ARG-52</scope>
</reference>
<reference key="16">
    <citation type="journal article" date="2006" name="J. Bacteriol.">
        <title>YeeI, a novel protein involved in modulation of the activity of the glucose-phosphotransferase system in Escherichia coli K-12.</title>
        <authorList>
            <person name="Becker A.-K."/>
            <person name="Zeppenfeld T."/>
            <person name="Staab A."/>
            <person name="Seitz S."/>
            <person name="Boos W."/>
            <person name="Morita T."/>
            <person name="Aiba H."/>
            <person name="Mahr K."/>
            <person name="Titgemeyer F."/>
            <person name="Jahreis K."/>
        </authorList>
    </citation>
    <scope>INTERACTION WITH MTFA</scope>
    <scope>ACTIVITY REGULATION</scope>
    <source>
        <strain>K12</strain>
    </source>
</reference>
<reference key="17">
    <citation type="journal article" date="2012" name="J. Bacteriol.">
        <title>Characterization of MtfA, a novel regulatory output signal protein of the glucose-phosphotransferase system in Escherichia coli K-12.</title>
        <authorList>
            <person name="Goehler A.K."/>
            <person name="Staab A."/>
            <person name="Gabor E."/>
            <person name="Homann K."/>
            <person name="Klang E."/>
            <person name="Kosfeld A."/>
            <person name="Muus J.E."/>
            <person name="Wulftange J.S."/>
            <person name="Jahreis K."/>
        </authorList>
    </citation>
    <scope>INTERACTION WITH MTFA</scope>
    <scope>ACTIVITY REGULATION</scope>
    <scope>MUTAGENESIS OF HIS-86</scope>
    <source>
        <strain>K12</strain>
    </source>
</reference>
<reference evidence="21" key="18">
    <citation type="journal article" date="2005" name="J. Biol. Chem.">
        <title>The crystal structure of Mlc, a global regulator of sugar metabolism in Escherichia coli.</title>
        <authorList>
            <person name="Schiefner A."/>
            <person name="Gerber K."/>
            <person name="Seitz S."/>
            <person name="Welte W."/>
            <person name="Diederichs K."/>
            <person name="Boos W."/>
        </authorList>
    </citation>
    <scope>X-RAY CRYSTALLOGRAPHY (2.7 ANGSTROMS) IN COMPLEX WITH ZN(2+)</scope>
    <scope>SUBUNIT</scope>
    <scope>DOMAIN</scope>
    <scope>MUTAGENESIS OF CYS-257 AND CYS-259</scope>
</reference>
<reference evidence="22" key="19">
    <citation type="journal article" date="2008" name="Proc. Natl. Acad. Sci. U.S.A.">
        <title>Analyses of Mlc-IIBGlc interaction and a plausible molecular mechanism of Mlc inactivation by membrane sequestration.</title>
        <authorList>
            <person name="Nam T.W."/>
            <person name="Jung H.I."/>
            <person name="An Y.J."/>
            <person name="Park Y.H."/>
            <person name="Lee S.H."/>
            <person name="Seok Y.J."/>
            <person name="Cha S.S."/>
        </authorList>
    </citation>
    <scope>X-RAY CRYSTALLOGRAPHY (2.85 ANGSTROMS) IN COMPLEX WITH PTSG EIIB DOMAIN AND ZN(2+)</scope>
    <scope>DNA-BINDING</scope>
    <scope>ACTIVITY REGULATION</scope>
    <scope>INTERACTION WITH PTSG EIIB DOMAIN</scope>
    <scope>SUBUNIT</scope>
    <scope>SUBCELLULAR LOCATION</scope>
    <scope>DOMAIN</scope>
    <scope>MUTAGENESIS OF PHE-136; ARG-306 AND LEU-310</scope>
</reference>
<proteinExistence type="evidence at protein level"/>
<gene>
    <name evidence="18" type="primary">mlc</name>
    <name evidence="19" type="synonym">dgsA</name>
    <name type="ordered locus">b1594</name>
    <name type="ordered locus">JW1586</name>
</gene>
<comment type="function">
    <text evidence="2 6 7 14 15 16">Global regulator of carbohydrate metabolism (PubMed:10464268, PubMed:11361067, PubMed:11934616, PubMed:9484892, PubMed:9484893, PubMed:9781886). Represses the expression of several genes involved in sugar transport and utilization, in particular phosphoenolpyruvate-carbohydrate phosphotransferase system (PTS) genes (PubMed:10464268, PubMed:9484892, PubMed:9484893, PubMed:9781886). Represses expression of ptsG (EIICB(Glc)), which encodes the PTS system glucose-specific EIICB component (PubMed:9781886). Also represses the expression of the manXYZ operon, encoding the mannose-specific PTS system, expression of malT, encoding the transcriptional activator of the maltose regulon, and expression of the pts operon, composed of the genes ptsH, ptsI and crr (PubMed:10464268, PubMed:9484892, PubMed:9484893). Represses its own expression (PubMed:9484893). Acts by binding to the regulatory region of the target genes (PubMed:10464268, PubMed:9484893, PubMed:9781886).</text>
</comment>
<comment type="activity regulation">
    <text evidence="2 3 4 8 11 12 13 16">Activity is modulated by glucose (PubMed:10464268, PubMed:9781886). In the presence of glucose, is inhibited by interaction with the dephosphorylated form of PtsG, which sequesters Mlc in the inner membrane and prevents Mlc binding to its target promoters (PubMed:11032803, PubMed:11157755, PubMed:12529317, PubMed:18319344). The restriction of conformational freedom resulting from the anchoring of four ends of Mlc to the membrane could be the primary cause of its loss of DNA-binding activity in vivo (PubMed:18319344). Activity is also inhibited by interaction with the Mlc titration factor A (mtfA) (PubMed:16855233, PubMed:22178967). The inactivation mechanisms of Mlc by dephosphorylated PtsG and MtfA differ significantly (PubMed:22178967).</text>
</comment>
<comment type="subunit">
    <text evidence="3 4 8 9 10 11 12 13">Homodimer (PubMed:15929984). Homotetramer (PubMed:12529317, PubMed:15929984, PubMed:16510988, PubMed:18319344). There is probably an equilibrium between the dimeric and the tetrameric form (PubMed:15929984). Interacts with dephosphorylated PtsG (PubMed:11032803, PubMed:11157755, PubMed:12529317, PubMed:18319344). Mlc and PtsG EIIB domain form a complex with the 1:1 stoichiometry (PubMed:18319344). Interacts with MtfA (PubMed:16855233, PubMed:22178967).</text>
</comment>
<comment type="interaction">
    <interactant intactId="EBI-1116104">
        <id>P50456</id>
    </interactant>
    <interactant intactId="EBI-1116104">
        <id>P50456</id>
        <label>mlc</label>
    </interactant>
    <organismsDiffer>false</organismsDiffer>
    <experiments>2</experiments>
</comment>
<comment type="interaction">
    <interactant intactId="EBI-1116104">
        <id>P50456</id>
    </interactant>
    <interactant intactId="EBI-1126682">
        <id>P76346</id>
        <label>mtfA</label>
    </interactant>
    <organismsDiffer>false</organismsDiffer>
    <experiments>2</experiments>
</comment>
<comment type="interaction">
    <interactant intactId="EBI-1116104">
        <id>P50456</id>
    </interactant>
    <interactant intactId="EBI-903497">
        <id>P69786</id>
        <label>ptsG</label>
    </interactant>
    <organismsDiffer>false</organismsDiffer>
    <experiments>3</experiments>
</comment>
<comment type="subcellular location">
    <subcellularLocation>
        <location evidence="20">Cytoplasm</location>
    </subcellularLocation>
    <text evidence="3 8 12">Interaction with dephosphorylated PtsG leads to the sequestration of Mlc in the inner membrane fraction.</text>
</comment>
<comment type="induction">
    <text evidence="5 15">Expression is modulated by the cAMP-CRP complex (PubMed:11340070). Negatively autoregulated (PubMed:11340070, PubMed:9484893). cAMP-CRP and Mlc work together to maintain the level of Mlc optimum in response to availability of glucose (PubMed:11340070). Weakly repressed by NagC (PubMed:9484893). Transcription is induced by heat shock via the sigma-32 factor (rpoH) (PubMed:11340070).</text>
</comment>
<comment type="domain">
    <text evidence="8 9 12">Is composed of three domains: a helix-turn-helix (HTH) DNA-binding domain, a PtsG-binding domain and an oligomerization domain (PubMed:12529317, PubMed:15929984, PubMed:18319344). The zinc ion probably plays an important structural role for the correct orientation of the HTH domain (PubMed:15929984).</text>
</comment>
<comment type="disruption phenotype">
    <text evidence="15 16">Disruption of the gene leads to a threefold increase in malT expression (PubMed:9484893). Disruption also causes the constitutive expression of ptsG (PubMed:9781886).</text>
</comment>
<comment type="similarity">
    <text evidence="20">Belongs to the ROK (NagC/XylR) family.</text>
</comment>
<sequence length="406" mass="44316">MVAENQPGHIDQIKQTNAGAVYRLIDQLGPVSRIDLSRLAQLAPASITKIVREMLEAHLVQELEIKEAGNRGRPAVGLVVETEAWHYLSLRISRGEIFLALRDLSSKLVVEESQELALKDDLPLLDRIISHIDQFFIRHQKKLERLTSIAITLPGIIDTENGIVHRMPFYEDVKEMPLGEALEQHTGVPVYIQHDISAWTMAEALFGASRGARDVIQVVIDHNVGAGVITDGHLLHAGSSSLVEIGHTQVDPYGKRCYCGNHGCLETIASVDSILELAQLRLNQSMSSMLHGQPLTVDSLCQAALRGDLLAKDIITGVGAHVGRILAIMVNLFNPQKILIGSPLSKAADILFPVISDSIRQQALPAYSQHISVESTQFSNQGTMAGAALVKDAMYNGSLLIRLLQG</sequence>
<evidence type="ECO:0000250" key="1"/>
<evidence type="ECO:0000269" key="2">
    <source>
    </source>
</evidence>
<evidence type="ECO:0000269" key="3">
    <source>
    </source>
</evidence>
<evidence type="ECO:0000269" key="4">
    <source>
    </source>
</evidence>
<evidence type="ECO:0000269" key="5">
    <source>
    </source>
</evidence>
<evidence type="ECO:0000269" key="6">
    <source>
    </source>
</evidence>
<evidence type="ECO:0000269" key="7">
    <source>
    </source>
</evidence>
<evidence type="ECO:0000269" key="8">
    <source>
    </source>
</evidence>
<evidence type="ECO:0000269" key="9">
    <source>
    </source>
</evidence>
<evidence type="ECO:0000269" key="10">
    <source>
    </source>
</evidence>
<evidence type="ECO:0000269" key="11">
    <source>
    </source>
</evidence>
<evidence type="ECO:0000269" key="12">
    <source>
    </source>
</evidence>
<evidence type="ECO:0000269" key="13">
    <source>
    </source>
</evidence>
<evidence type="ECO:0000269" key="14">
    <source>
    </source>
</evidence>
<evidence type="ECO:0000269" key="15">
    <source>
    </source>
</evidence>
<evidence type="ECO:0000269" key="16">
    <source>
    </source>
</evidence>
<evidence type="ECO:0000303" key="17">
    <source>
    </source>
</evidence>
<evidence type="ECO:0000303" key="18">
    <source>
    </source>
</evidence>
<evidence type="ECO:0000303" key="19">
    <source>
    </source>
</evidence>
<evidence type="ECO:0000305" key="20"/>
<evidence type="ECO:0007744" key="21">
    <source>
        <dbReference type="PDB" id="1Z6R"/>
    </source>
</evidence>
<evidence type="ECO:0007744" key="22">
    <source>
        <dbReference type="PDB" id="3BP8"/>
    </source>
</evidence>
<evidence type="ECO:0007829" key="23">
    <source>
        <dbReference type="PDB" id="1Z6R"/>
    </source>
</evidence>
<name>MLC_ECOLI</name>
<accession>P50456</accession>
<accession>P77593</accession>
<protein>
    <recommendedName>
        <fullName evidence="20">DNA-binding transcriptional repressor Mlc</fullName>
    </recommendedName>
    <alternativeName>
        <fullName evidence="18">Making large colonies protein</fullName>
    </alternativeName>
    <alternativeName>
        <fullName evidence="17">Membrane linked control</fullName>
    </alternativeName>
</protein>
<dbReference type="EMBL" id="D32222">
    <property type="protein sequence ID" value="BAA06978.1"/>
    <property type="molecule type" value="Genomic_DNA"/>
</dbReference>
<dbReference type="EMBL" id="U00096">
    <property type="protein sequence ID" value="AAC74666.1"/>
    <property type="molecule type" value="Genomic_DNA"/>
</dbReference>
<dbReference type="EMBL" id="AP009048">
    <property type="protein sequence ID" value="BAA15318.1"/>
    <property type="molecule type" value="Genomic_DNA"/>
</dbReference>
<dbReference type="PIR" id="D64915">
    <property type="entry name" value="D64915"/>
</dbReference>
<dbReference type="RefSeq" id="NP_416111.1">
    <property type="nucleotide sequence ID" value="NC_000913.3"/>
</dbReference>
<dbReference type="RefSeq" id="WP_000225262.1">
    <property type="nucleotide sequence ID" value="NZ_SSZK01000001.1"/>
</dbReference>
<dbReference type="PDB" id="1Z6R">
    <property type="method" value="X-ray"/>
    <property type="resolution" value="2.70 A"/>
    <property type="chains" value="A/B/C/D=1-406"/>
</dbReference>
<dbReference type="PDB" id="3BP8">
    <property type="method" value="X-ray"/>
    <property type="resolution" value="2.85 A"/>
    <property type="chains" value="A/B=1-406"/>
</dbReference>
<dbReference type="PDBsum" id="1Z6R"/>
<dbReference type="PDBsum" id="3BP8"/>
<dbReference type="SMR" id="P50456"/>
<dbReference type="BioGRID" id="4259119">
    <property type="interactions" value="164"/>
</dbReference>
<dbReference type="ComplexPortal" id="CPX-2242">
    <property type="entry name" value="mlc-EIIB transcriptional regulator complex"/>
</dbReference>
<dbReference type="DIP" id="DIP-10219N"/>
<dbReference type="FunCoup" id="P50456">
    <property type="interactions" value="270"/>
</dbReference>
<dbReference type="IntAct" id="P50456">
    <property type="interactions" value="9"/>
</dbReference>
<dbReference type="STRING" id="511145.b1594"/>
<dbReference type="jPOST" id="P50456"/>
<dbReference type="PaxDb" id="511145-b1594"/>
<dbReference type="EnsemblBacteria" id="AAC74666">
    <property type="protein sequence ID" value="AAC74666"/>
    <property type="gene ID" value="b1594"/>
</dbReference>
<dbReference type="GeneID" id="945510"/>
<dbReference type="KEGG" id="ecj:JW1586"/>
<dbReference type="KEGG" id="eco:b1594"/>
<dbReference type="KEGG" id="ecoc:C3026_09180"/>
<dbReference type="PATRIC" id="fig|1411691.4.peg.668"/>
<dbReference type="EchoBASE" id="EB2950"/>
<dbReference type="eggNOG" id="COG1940">
    <property type="taxonomic scope" value="Bacteria"/>
</dbReference>
<dbReference type="HOGENOM" id="CLU_036604_13_1_6"/>
<dbReference type="InParanoid" id="P50456"/>
<dbReference type="OMA" id="FFIRHQQ"/>
<dbReference type="OrthoDB" id="3189808at2"/>
<dbReference type="PhylomeDB" id="P50456"/>
<dbReference type="BioCyc" id="EcoCyc:PD01896"/>
<dbReference type="EvolutionaryTrace" id="P50456"/>
<dbReference type="PRO" id="PR:P50456"/>
<dbReference type="Proteomes" id="UP000000625">
    <property type="component" value="Chromosome"/>
</dbReference>
<dbReference type="GO" id="GO:0005737">
    <property type="term" value="C:cytoplasm"/>
    <property type="evidence" value="ECO:0000304"/>
    <property type="project" value="EcoCyc"/>
</dbReference>
<dbReference type="GO" id="GO:0016020">
    <property type="term" value="C:membrane"/>
    <property type="evidence" value="ECO:0000303"/>
    <property type="project" value="ComplexPortal"/>
</dbReference>
<dbReference type="GO" id="GO:0003677">
    <property type="term" value="F:DNA binding"/>
    <property type="evidence" value="ECO:0000314"/>
    <property type="project" value="EcoCyc"/>
</dbReference>
<dbReference type="GO" id="GO:0042802">
    <property type="term" value="F:identical protein binding"/>
    <property type="evidence" value="ECO:0000353"/>
    <property type="project" value="IntAct"/>
</dbReference>
<dbReference type="GO" id="GO:0046872">
    <property type="term" value="F:metal ion binding"/>
    <property type="evidence" value="ECO:0007669"/>
    <property type="project" value="UniProtKB-KW"/>
</dbReference>
<dbReference type="GO" id="GO:0006351">
    <property type="term" value="P:DNA-templated transcription"/>
    <property type="evidence" value="ECO:0000314"/>
    <property type="project" value="EcoCyc"/>
</dbReference>
<dbReference type="GO" id="GO:0006355">
    <property type="term" value="P:regulation of DNA-templated transcription"/>
    <property type="evidence" value="ECO:0000314"/>
    <property type="project" value="ComplexPortal"/>
</dbReference>
<dbReference type="CDD" id="cd24074">
    <property type="entry name" value="ASKHA_ATPase_ROK_Mlc"/>
    <property type="match status" value="1"/>
</dbReference>
<dbReference type="FunFam" id="1.10.10.10:FF:000045">
    <property type="entry name" value="ROK family transcriptional regulator"/>
    <property type="match status" value="1"/>
</dbReference>
<dbReference type="FunFam" id="3.30.420.40:FF:000079">
    <property type="entry name" value="ROK family transcriptional regulator"/>
    <property type="match status" value="1"/>
</dbReference>
<dbReference type="FunFam" id="3.30.420.40:FF:000082">
    <property type="entry name" value="ROK family transcriptional regulator"/>
    <property type="match status" value="1"/>
</dbReference>
<dbReference type="Gene3D" id="3.30.420.40">
    <property type="match status" value="2"/>
</dbReference>
<dbReference type="Gene3D" id="1.10.10.10">
    <property type="entry name" value="Winged helix-like DNA-binding domain superfamily/Winged helix DNA-binding domain"/>
    <property type="match status" value="1"/>
</dbReference>
<dbReference type="InterPro" id="IPR043129">
    <property type="entry name" value="ATPase_NBD"/>
</dbReference>
<dbReference type="InterPro" id="IPR000600">
    <property type="entry name" value="ROK"/>
</dbReference>
<dbReference type="InterPro" id="IPR036388">
    <property type="entry name" value="WH-like_DNA-bd_sf"/>
</dbReference>
<dbReference type="InterPro" id="IPR036390">
    <property type="entry name" value="WH_DNA-bd_sf"/>
</dbReference>
<dbReference type="PANTHER" id="PTHR18964:SF149">
    <property type="entry name" value="BIFUNCTIONAL UDP-N-ACETYLGLUCOSAMINE 2-EPIMERASE_N-ACETYLMANNOSAMINE KINASE"/>
    <property type="match status" value="1"/>
</dbReference>
<dbReference type="PANTHER" id="PTHR18964">
    <property type="entry name" value="ROK (REPRESSOR, ORF, KINASE) FAMILY"/>
    <property type="match status" value="1"/>
</dbReference>
<dbReference type="Pfam" id="PF00480">
    <property type="entry name" value="ROK"/>
    <property type="match status" value="1"/>
</dbReference>
<dbReference type="SUPFAM" id="SSF53067">
    <property type="entry name" value="Actin-like ATPase domain"/>
    <property type="match status" value="1"/>
</dbReference>
<dbReference type="SUPFAM" id="SSF46785">
    <property type="entry name" value="Winged helix' DNA-binding domain"/>
    <property type="match status" value="1"/>
</dbReference>
<organism>
    <name type="scientific">Escherichia coli (strain K12)</name>
    <dbReference type="NCBI Taxonomy" id="83333"/>
    <lineage>
        <taxon>Bacteria</taxon>
        <taxon>Pseudomonadati</taxon>
        <taxon>Pseudomonadota</taxon>
        <taxon>Gammaproteobacteria</taxon>
        <taxon>Enterobacterales</taxon>
        <taxon>Enterobacteriaceae</taxon>
        <taxon>Escherichia</taxon>
    </lineage>
</organism>
<keyword id="KW-0002">3D-structure</keyword>
<keyword id="KW-0119">Carbohydrate metabolism</keyword>
<keyword id="KW-0963">Cytoplasm</keyword>
<keyword id="KW-0238">DNA-binding</keyword>
<keyword id="KW-0479">Metal-binding</keyword>
<keyword id="KW-1185">Reference proteome</keyword>
<keyword id="KW-0804">Transcription</keyword>
<keyword id="KW-0805">Transcription regulation</keyword>
<keyword id="KW-0862">Zinc</keyword>
<feature type="chain" id="PRO_0000095690" description="DNA-binding transcriptional repressor Mlc">
    <location>
        <begin position="1"/>
        <end position="406"/>
    </location>
</feature>
<feature type="DNA-binding region" description="H-T-H motif" evidence="1">
    <location>
        <begin position="33"/>
        <end position="42"/>
    </location>
</feature>
<feature type="binding site" evidence="9 12 21 22">
    <location>
        <position position="247"/>
    </location>
    <ligand>
        <name>Zn(2+)</name>
        <dbReference type="ChEBI" id="CHEBI:29105"/>
    </ligand>
</feature>
<feature type="binding site" evidence="9 12 21 22">
    <location>
        <position position="257"/>
    </location>
    <ligand>
        <name>Zn(2+)</name>
        <dbReference type="ChEBI" id="CHEBI:29105"/>
    </ligand>
</feature>
<feature type="binding site" evidence="9 12 21 22">
    <location>
        <position position="259"/>
    </location>
    <ligand>
        <name>Zn(2+)</name>
        <dbReference type="ChEBI" id="CHEBI:29105"/>
    </ligand>
</feature>
<feature type="binding site" evidence="9 12 21 22">
    <location>
        <position position="264"/>
    </location>
    <ligand>
        <name>Zn(2+)</name>
        <dbReference type="ChEBI" id="CHEBI:29105"/>
    </ligand>
</feature>
<feature type="mutagenesis site" description="Shows increased expression and forms larger colonies." evidence="10">
    <original>R</original>
    <variation>H</variation>
    <location>
        <position position="52"/>
    </location>
</feature>
<feature type="mutagenesis site" description="Can be bound and inactivated by MtfA." evidence="13">
    <original>H</original>
    <variation>R</variation>
    <location>
        <position position="86"/>
    </location>
</feature>
<feature type="mutagenesis site" description="Decreases association with PtsG EIIB domain." evidence="12">
    <original>F</original>
    <variation>A</variation>
    <location>
        <position position="136"/>
    </location>
</feature>
<feature type="mutagenesis site" description="Strongly reduced activity; when associated with A-259." evidence="9">
    <original>C</original>
    <variation>A</variation>
    <location>
        <position position="257"/>
    </location>
</feature>
<feature type="mutagenesis site" description="Strongly reduced activity; when associated with S-259." evidence="9">
    <original>C</original>
    <variation>S</variation>
    <location>
        <position position="257"/>
    </location>
</feature>
<feature type="mutagenesis site" description="Strongly reduced activity; when associated with A-257." evidence="9">
    <original>C</original>
    <variation>A</variation>
    <location>
        <position position="259"/>
    </location>
</feature>
<feature type="mutagenesis site" description="Strongly reduced activity; when associated with S-257." evidence="9">
    <original>C</original>
    <variation>S</variation>
    <location>
        <position position="259"/>
    </location>
</feature>
<feature type="mutagenesis site" description="Forms dimers but not tetramers; when associated with G-310." evidence="12">
    <original>R</original>
    <variation>G</variation>
    <location>
        <position position="306"/>
    </location>
</feature>
<feature type="mutagenesis site" description="Forms dimers but not tetramers; when associated with G-306." evidence="12">
    <original>L</original>
    <variation>G</variation>
    <location>
        <position position="310"/>
    </location>
</feature>
<feature type="sequence conflict" description="In Ref. 1; BAA06978." evidence="20" ref="1">
    <original>G</original>
    <variation>A</variation>
    <location>
        <position position="179"/>
    </location>
</feature>
<feature type="helix" evidence="23">
    <location>
        <begin position="13"/>
        <end position="26"/>
    </location>
</feature>
<feature type="helix" evidence="23">
    <location>
        <begin position="33"/>
        <end position="39"/>
    </location>
</feature>
<feature type="helix" evidence="23">
    <location>
        <begin position="44"/>
        <end position="56"/>
    </location>
</feature>
<feature type="strand" evidence="23">
    <location>
        <begin position="59"/>
        <end position="62"/>
    </location>
</feature>
<feature type="strand" evidence="23">
    <location>
        <begin position="78"/>
        <end position="80"/>
    </location>
</feature>
<feature type="strand" evidence="23">
    <location>
        <begin position="86"/>
        <end position="93"/>
    </location>
</feature>
<feature type="strand" evidence="23">
    <location>
        <begin position="96"/>
        <end position="103"/>
    </location>
</feature>
<feature type="strand" evidence="23">
    <location>
        <begin position="108"/>
        <end position="115"/>
    </location>
</feature>
<feature type="helix" evidence="23">
    <location>
        <begin position="124"/>
        <end position="138"/>
    </location>
</feature>
<feature type="helix" evidence="23">
    <location>
        <begin position="140"/>
        <end position="142"/>
    </location>
</feature>
<feature type="strand" evidence="23">
    <location>
        <begin position="146"/>
        <end position="158"/>
    </location>
</feature>
<feature type="turn" evidence="23">
    <location>
        <begin position="159"/>
        <end position="162"/>
    </location>
</feature>
<feature type="strand" evidence="23">
    <location>
        <begin position="163"/>
        <end position="166"/>
    </location>
</feature>
<feature type="strand" evidence="23">
    <location>
        <begin position="174"/>
        <end position="176"/>
    </location>
</feature>
<feature type="helix" evidence="23">
    <location>
        <begin position="178"/>
        <end position="186"/>
    </location>
</feature>
<feature type="strand" evidence="23">
    <location>
        <begin position="190"/>
        <end position="194"/>
    </location>
</feature>
<feature type="helix" evidence="23">
    <location>
        <begin position="195"/>
        <end position="206"/>
    </location>
</feature>
<feature type="turn" evidence="23">
    <location>
        <begin position="208"/>
        <end position="211"/>
    </location>
</feature>
<feature type="strand" evidence="23">
    <location>
        <begin position="213"/>
        <end position="230"/>
    </location>
</feature>
<feature type="turn" evidence="23">
    <location>
        <begin position="235"/>
        <end position="238"/>
    </location>
</feature>
<feature type="helix" evidence="23">
    <location>
        <begin position="245"/>
        <end position="247"/>
    </location>
</feature>
<feature type="strand" evidence="23">
    <location>
        <begin position="248"/>
        <end position="250"/>
    </location>
</feature>
<feature type="strand" evidence="23">
    <location>
        <begin position="262"/>
        <end position="264"/>
    </location>
</feature>
<feature type="helix" evidence="23">
    <location>
        <begin position="266"/>
        <end position="269"/>
    </location>
</feature>
<feature type="helix" evidence="23">
    <location>
        <begin position="271"/>
        <end position="282"/>
    </location>
</feature>
<feature type="helix" evidence="23">
    <location>
        <begin position="289"/>
        <end position="291"/>
    </location>
</feature>
<feature type="helix" evidence="23">
    <location>
        <begin position="297"/>
        <end position="305"/>
    </location>
</feature>
<feature type="helix" evidence="23">
    <location>
        <begin position="309"/>
        <end position="333"/>
    </location>
</feature>
<feature type="strand" evidence="23">
    <location>
        <begin position="336"/>
        <end position="342"/>
    </location>
</feature>
<feature type="helix" evidence="23">
    <location>
        <begin position="343"/>
        <end position="347"/>
    </location>
</feature>
<feature type="helix" evidence="23">
    <location>
        <begin position="348"/>
        <end position="362"/>
    </location>
</feature>
<feature type="helix" evidence="23">
    <location>
        <begin position="365"/>
        <end position="368"/>
    </location>
</feature>
<feature type="strand" evidence="23">
    <location>
        <begin position="372"/>
        <end position="375"/>
    </location>
</feature>
<feature type="turn" evidence="23">
    <location>
        <begin position="382"/>
        <end position="385"/>
    </location>
</feature>
<feature type="helix" evidence="23">
    <location>
        <begin position="386"/>
        <end position="393"/>
    </location>
</feature>
<feature type="helix" evidence="23">
    <location>
        <begin position="398"/>
        <end position="403"/>
    </location>
</feature>